<accession>B4LYC5</accession>
<protein>
    <recommendedName>
        <fullName evidence="3">Sensory neuron membrane protein 1</fullName>
    </recommendedName>
</protein>
<keyword id="KW-1003">Cell membrane</keyword>
<keyword id="KW-1015">Disulfide bond</keyword>
<keyword id="KW-0325">Glycoprotein</keyword>
<keyword id="KW-0472">Membrane</keyword>
<keyword id="KW-0552">Olfaction</keyword>
<keyword id="KW-0675">Receptor</keyword>
<keyword id="KW-1185">Reference proteome</keyword>
<keyword id="KW-0716">Sensory transduction</keyword>
<keyword id="KW-0812">Transmembrane</keyword>
<keyword id="KW-1133">Transmembrane helix</keyword>
<sequence>MLVHRMKLLTASAGILLFAIIFGWVLFPQILKFMISKQVTLKPGTDIRDLWSATPFPLHFYIYIFNVTNPEEVAEGGKPRVQEIGPFVFDEWKDKYDLVDDVVEDTVSYNMRNTFIFNEKASSPLTGEEIITLPHPLLQSIGITVQRERAAMMEMVAKALAIVFPDAKPFLTAKFMDLFFRGIDVDCSSDEFAAKALCTVFYTGEVKQAKQVNQTHFLFSFLGQANHSDAGRFTVCRGVKNNKKLGKVVKFADEPEMDMWPGDECNRFVGTDSTVFAPGMKQEAGLWAFTPDICRSLGAIYQRKTTYHGMPALRYTLDLGDVRLDEKLHCFCDDPENLETCPPKGTMNLAPCVGGPLIASMPHFLNGDPKLIQDVDGLHPNEKEHAVFIDFELMSGTPFQAAKRLQFNLDVEPVQGIEPLRHLRKLIMPMFWVEEGVQLNKTYTNMVKYTLFLGLKFNSGLRWTLITLSLVGFMSAGYLFYQKSDSLDITVPPNIIRESNKVANAPKPDRQQQPKAHLVPLPGVNLSNPKVEHRDRY</sequence>
<reference evidence="7" key="1">
    <citation type="journal article" date="2007" name="Nature">
        <title>Evolution of genes and genomes on the Drosophila phylogeny.</title>
        <authorList>
            <consortium name="Drosophila 12 genomes consortium"/>
        </authorList>
    </citation>
    <scope>NUCLEOTIDE SEQUENCE [LARGE SCALE GENOMIC DNA]</scope>
    <source>
        <strain evidence="7">Tucson 15010-1051.87</strain>
    </source>
</reference>
<gene>
    <name evidence="3" type="primary">Snmp1</name>
    <name type="ORF">GJ23858</name>
</gene>
<organism>
    <name type="scientific">Drosophila virilis</name>
    <name type="common">Fruit fly</name>
    <dbReference type="NCBI Taxonomy" id="7244"/>
    <lineage>
        <taxon>Eukaryota</taxon>
        <taxon>Metazoa</taxon>
        <taxon>Ecdysozoa</taxon>
        <taxon>Arthropoda</taxon>
        <taxon>Hexapoda</taxon>
        <taxon>Insecta</taxon>
        <taxon>Pterygota</taxon>
        <taxon>Neoptera</taxon>
        <taxon>Endopterygota</taxon>
        <taxon>Diptera</taxon>
        <taxon>Brachycera</taxon>
        <taxon>Muscomorpha</taxon>
        <taxon>Ephydroidea</taxon>
        <taxon>Drosophilidae</taxon>
        <taxon>Drosophila</taxon>
    </lineage>
</organism>
<evidence type="ECO:0000250" key="1">
    <source>
        <dbReference type="UniProtKB" id="O02351"/>
    </source>
</evidence>
<evidence type="ECO:0000250" key="2">
    <source>
        <dbReference type="UniProtKB" id="P26201"/>
    </source>
</evidence>
<evidence type="ECO:0000250" key="3">
    <source>
        <dbReference type="UniProtKB" id="Q9VDD3"/>
    </source>
</evidence>
<evidence type="ECO:0000255" key="4"/>
<evidence type="ECO:0000256" key="5">
    <source>
        <dbReference type="SAM" id="MobiDB-lite"/>
    </source>
</evidence>
<evidence type="ECO:0000305" key="6"/>
<evidence type="ECO:0000312" key="7">
    <source>
        <dbReference type="EMBL" id="EDW66921.1"/>
    </source>
</evidence>
<name>SNMP1_DROVI</name>
<comment type="function">
    <text evidence="3">Plays an olfactory role that is not restricted to pheromone sensitivity.</text>
</comment>
<comment type="subcellular location">
    <subcellularLocation>
        <location evidence="1">Cell membrane</location>
        <topology evidence="1">Multi-pass membrane protein</topology>
    </subcellularLocation>
</comment>
<comment type="similarity">
    <text evidence="6">Belongs to the CD36 family.</text>
</comment>
<dbReference type="EMBL" id="CH940650">
    <property type="protein sequence ID" value="EDW66921.1"/>
    <property type="molecule type" value="Genomic_DNA"/>
</dbReference>
<dbReference type="RefSeq" id="XP_002053401.1">
    <property type="nucleotide sequence ID" value="XM_002053365.4"/>
</dbReference>
<dbReference type="SMR" id="B4LYC5"/>
<dbReference type="FunCoup" id="B4LYC5">
    <property type="interactions" value="1"/>
</dbReference>
<dbReference type="STRING" id="7244.B4LYC5"/>
<dbReference type="GlyCosmos" id="B4LYC5">
    <property type="glycosylation" value="4 sites, No reported glycans"/>
</dbReference>
<dbReference type="EnsemblMetazoa" id="FBtr0239783">
    <property type="protein sequence ID" value="FBpp0238275"/>
    <property type="gene ID" value="FBgn0210953"/>
</dbReference>
<dbReference type="EnsemblMetazoa" id="XM_002053365.3">
    <property type="protein sequence ID" value="XP_002053401.1"/>
    <property type="gene ID" value="LOC6629903"/>
</dbReference>
<dbReference type="GeneID" id="6629903"/>
<dbReference type="KEGG" id="dvi:6629903"/>
<dbReference type="CTD" id="42514"/>
<dbReference type="eggNOG" id="KOG3776">
    <property type="taxonomic scope" value="Eukaryota"/>
</dbReference>
<dbReference type="HOGENOM" id="CLU_019853_1_2_1"/>
<dbReference type="InParanoid" id="B4LYC5"/>
<dbReference type="OMA" id="QRKSSYH"/>
<dbReference type="OrthoDB" id="10024078at2759"/>
<dbReference type="PhylomeDB" id="B4LYC5"/>
<dbReference type="ChiTaRS" id="Snmp1">
    <property type="organism name" value="fly"/>
</dbReference>
<dbReference type="Proteomes" id="UP000008792">
    <property type="component" value="Unassembled WGS sequence"/>
</dbReference>
<dbReference type="GO" id="GO:0005929">
    <property type="term" value="C:cilium"/>
    <property type="evidence" value="ECO:0007669"/>
    <property type="project" value="EnsemblMetazoa"/>
</dbReference>
<dbReference type="GO" id="GO:0005737">
    <property type="term" value="C:cytoplasm"/>
    <property type="evidence" value="ECO:0007669"/>
    <property type="project" value="TreeGrafter"/>
</dbReference>
<dbReference type="GO" id="GO:0030425">
    <property type="term" value="C:dendrite"/>
    <property type="evidence" value="ECO:0007669"/>
    <property type="project" value="EnsemblMetazoa"/>
</dbReference>
<dbReference type="GO" id="GO:0043025">
    <property type="term" value="C:neuronal cell body"/>
    <property type="evidence" value="ECO:0007669"/>
    <property type="project" value="EnsemblMetazoa"/>
</dbReference>
<dbReference type="GO" id="GO:0005886">
    <property type="term" value="C:plasma membrane"/>
    <property type="evidence" value="ECO:0007669"/>
    <property type="project" value="UniProtKB-SubCell"/>
</dbReference>
<dbReference type="GO" id="GO:0005044">
    <property type="term" value="F:scavenger receptor activity"/>
    <property type="evidence" value="ECO:0007669"/>
    <property type="project" value="TreeGrafter"/>
</dbReference>
<dbReference type="GO" id="GO:0007166">
    <property type="term" value="P:cell surface receptor signaling pathway"/>
    <property type="evidence" value="ECO:0007669"/>
    <property type="project" value="EnsemblMetazoa"/>
</dbReference>
<dbReference type="GO" id="GO:0071444">
    <property type="term" value="P:cellular response to pheromone"/>
    <property type="evidence" value="ECO:0007669"/>
    <property type="project" value="EnsemblMetazoa"/>
</dbReference>
<dbReference type="GO" id="GO:0050911">
    <property type="term" value="P:detection of chemical stimulus involved in sensory perception of smell"/>
    <property type="evidence" value="ECO:0007669"/>
    <property type="project" value="EnsemblMetazoa"/>
</dbReference>
<dbReference type="GO" id="GO:0055088">
    <property type="term" value="P:lipid homeostasis"/>
    <property type="evidence" value="ECO:0007669"/>
    <property type="project" value="EnsemblMetazoa"/>
</dbReference>
<dbReference type="GO" id="GO:0035073">
    <property type="term" value="P:pupariation"/>
    <property type="evidence" value="ECO:0007669"/>
    <property type="project" value="EnsemblMetazoa"/>
</dbReference>
<dbReference type="InterPro" id="IPR002159">
    <property type="entry name" value="CD36_fam"/>
</dbReference>
<dbReference type="PANTHER" id="PTHR11923">
    <property type="entry name" value="SCAVENGER RECEPTOR CLASS B TYPE-1 SR-B1"/>
    <property type="match status" value="1"/>
</dbReference>
<dbReference type="PANTHER" id="PTHR11923:SF69">
    <property type="entry name" value="SENSORY NEURON MEMBRANE PROTEIN 1"/>
    <property type="match status" value="1"/>
</dbReference>
<dbReference type="Pfam" id="PF01130">
    <property type="entry name" value="CD36"/>
    <property type="match status" value="1"/>
</dbReference>
<dbReference type="PRINTS" id="PR01609">
    <property type="entry name" value="CD36FAMILY"/>
</dbReference>
<proteinExistence type="inferred from homology"/>
<feature type="chain" id="PRO_0000408245" description="Sensory neuron membrane protein 1">
    <location>
        <begin position="1"/>
        <end position="537"/>
    </location>
</feature>
<feature type="topological domain" description="Cytoplasmic" evidence="4">
    <location>
        <begin position="1"/>
        <end position="7"/>
    </location>
</feature>
<feature type="transmembrane region" description="Helical" evidence="4">
    <location>
        <begin position="8"/>
        <end position="28"/>
    </location>
</feature>
<feature type="topological domain" description="Extracellular" evidence="4">
    <location>
        <begin position="29"/>
        <end position="459"/>
    </location>
</feature>
<feature type="transmembrane region" description="Helical" evidence="4">
    <location>
        <begin position="460"/>
        <end position="480"/>
    </location>
</feature>
<feature type="topological domain" description="Cytoplasmic" evidence="4">
    <location>
        <begin position="481"/>
        <end position="537"/>
    </location>
</feature>
<feature type="region of interest" description="Disordered" evidence="5">
    <location>
        <begin position="503"/>
        <end position="537"/>
    </location>
</feature>
<feature type="glycosylation site" description="N-linked (GlcNAc...) asparagine" evidence="4">
    <location>
        <position position="66"/>
    </location>
</feature>
<feature type="glycosylation site" description="N-linked (GlcNAc...) asparagine" evidence="4">
    <location>
        <position position="213"/>
    </location>
</feature>
<feature type="glycosylation site" description="N-linked (GlcNAc...) asparagine" evidence="4">
    <location>
        <position position="226"/>
    </location>
</feature>
<feature type="glycosylation site" description="N-linked (GlcNAc...) asparagine" evidence="4">
    <location>
        <position position="440"/>
    </location>
</feature>
<feature type="disulfide bond" evidence="2">
    <location>
        <begin position="265"/>
        <end position="330"/>
    </location>
</feature>
<feature type="disulfide bond" evidence="2">
    <location>
        <begin position="294"/>
        <end position="352"/>
    </location>
</feature>
<feature type="disulfide bond" evidence="2">
    <location>
        <begin position="332"/>
        <end position="341"/>
    </location>
</feature>